<sequence>MSEIKDVIVQGLWKNNSALVQLLGLCPLLAVTSTATNALGLGLATTLVLTLTNLTISTLRHWTPAEIRIPIYVMIIASVVSAVQMLINAYAFGLYQSLGIFIPLIVTNCIVVGRAEAFAAKKGPALSALDGFSIGMGATCAMFVLGSLREIIGNGTLFDGADALLGSWAKVLRVEIFHTDSPFLLAMLPPGAFIGLGLMLAGKYLIDEKMKKRRTEAAAERALPNGETGNV</sequence>
<accession>B7MVB0</accession>
<organism>
    <name type="scientific">Escherichia coli O81 (strain ED1a)</name>
    <dbReference type="NCBI Taxonomy" id="585397"/>
    <lineage>
        <taxon>Bacteria</taxon>
        <taxon>Pseudomonadati</taxon>
        <taxon>Pseudomonadota</taxon>
        <taxon>Gammaproteobacteria</taxon>
        <taxon>Enterobacterales</taxon>
        <taxon>Enterobacteriaceae</taxon>
        <taxon>Escherichia</taxon>
    </lineage>
</organism>
<protein>
    <recommendedName>
        <fullName evidence="1">Ion-translocating oxidoreductase complex subunit E</fullName>
        <ecNumber evidence="1">7.-.-.-</ecNumber>
    </recommendedName>
    <alternativeName>
        <fullName evidence="1">Rsx electron transport complex subunit E</fullName>
    </alternativeName>
</protein>
<reference key="1">
    <citation type="journal article" date="2009" name="PLoS Genet.">
        <title>Organised genome dynamics in the Escherichia coli species results in highly diverse adaptive paths.</title>
        <authorList>
            <person name="Touchon M."/>
            <person name="Hoede C."/>
            <person name="Tenaillon O."/>
            <person name="Barbe V."/>
            <person name="Baeriswyl S."/>
            <person name="Bidet P."/>
            <person name="Bingen E."/>
            <person name="Bonacorsi S."/>
            <person name="Bouchier C."/>
            <person name="Bouvet O."/>
            <person name="Calteau A."/>
            <person name="Chiapello H."/>
            <person name="Clermont O."/>
            <person name="Cruveiller S."/>
            <person name="Danchin A."/>
            <person name="Diard M."/>
            <person name="Dossat C."/>
            <person name="Karoui M.E."/>
            <person name="Frapy E."/>
            <person name="Garry L."/>
            <person name="Ghigo J.M."/>
            <person name="Gilles A.M."/>
            <person name="Johnson J."/>
            <person name="Le Bouguenec C."/>
            <person name="Lescat M."/>
            <person name="Mangenot S."/>
            <person name="Martinez-Jehanne V."/>
            <person name="Matic I."/>
            <person name="Nassif X."/>
            <person name="Oztas S."/>
            <person name="Petit M.A."/>
            <person name="Pichon C."/>
            <person name="Rouy Z."/>
            <person name="Ruf C.S."/>
            <person name="Schneider D."/>
            <person name="Tourret J."/>
            <person name="Vacherie B."/>
            <person name="Vallenet D."/>
            <person name="Medigue C."/>
            <person name="Rocha E.P.C."/>
            <person name="Denamur E."/>
        </authorList>
    </citation>
    <scope>NUCLEOTIDE SEQUENCE [LARGE SCALE GENOMIC DNA]</scope>
    <source>
        <strain>ED1a</strain>
    </source>
</reference>
<keyword id="KW-0997">Cell inner membrane</keyword>
<keyword id="KW-1003">Cell membrane</keyword>
<keyword id="KW-0249">Electron transport</keyword>
<keyword id="KW-0472">Membrane</keyword>
<keyword id="KW-1278">Translocase</keyword>
<keyword id="KW-0812">Transmembrane</keyword>
<keyword id="KW-1133">Transmembrane helix</keyword>
<keyword id="KW-0813">Transport</keyword>
<comment type="function">
    <text evidence="1">Part of a membrane-bound complex that couples electron transfer with translocation of ions across the membrane. Required to maintain the reduced state of SoxR.</text>
</comment>
<comment type="subunit">
    <text evidence="1">The complex is composed of six subunits: RsxA, RsxB, RsxC, RsxD, RsxE and RsxG.</text>
</comment>
<comment type="subcellular location">
    <subcellularLocation>
        <location evidence="1">Cell inner membrane</location>
        <topology evidence="1">Multi-pass membrane protein</topology>
    </subcellularLocation>
</comment>
<comment type="similarity">
    <text evidence="1">Belongs to the NqrDE/RnfAE family.</text>
</comment>
<feature type="chain" id="PRO_1000135559" description="Ion-translocating oxidoreductase complex subunit E">
    <location>
        <begin position="1"/>
        <end position="231"/>
    </location>
</feature>
<feature type="transmembrane region" description="Helical" evidence="1">
    <location>
        <begin position="18"/>
        <end position="38"/>
    </location>
</feature>
<feature type="transmembrane region" description="Helical" evidence="1">
    <location>
        <begin position="39"/>
        <end position="59"/>
    </location>
</feature>
<feature type="transmembrane region" description="Helical" evidence="1">
    <location>
        <begin position="63"/>
        <end position="83"/>
    </location>
</feature>
<feature type="transmembrane region" description="Helical" evidence="1">
    <location>
        <begin position="86"/>
        <end position="106"/>
    </location>
</feature>
<feature type="transmembrane region" description="Helical" evidence="1">
    <location>
        <begin position="125"/>
        <end position="145"/>
    </location>
</feature>
<feature type="transmembrane region" description="Helical" evidence="1">
    <location>
        <begin position="182"/>
        <end position="202"/>
    </location>
</feature>
<evidence type="ECO:0000255" key="1">
    <source>
        <dbReference type="HAMAP-Rule" id="MF_00478"/>
    </source>
</evidence>
<gene>
    <name evidence="1" type="primary">rsxE</name>
    <name type="ordered locus">ECED1_1833</name>
</gene>
<name>RSXE_ECO81</name>
<proteinExistence type="inferred from homology"/>
<dbReference type="EC" id="7.-.-.-" evidence="1"/>
<dbReference type="EMBL" id="CU928162">
    <property type="protein sequence ID" value="CAR08026.2"/>
    <property type="molecule type" value="Genomic_DNA"/>
</dbReference>
<dbReference type="RefSeq" id="WP_001289646.1">
    <property type="nucleotide sequence ID" value="NC_011745.1"/>
</dbReference>
<dbReference type="SMR" id="B7MVB0"/>
<dbReference type="KEGG" id="ecq:ECED1_1833"/>
<dbReference type="HOGENOM" id="CLU_046659_1_0_6"/>
<dbReference type="Proteomes" id="UP000000748">
    <property type="component" value="Chromosome"/>
</dbReference>
<dbReference type="GO" id="GO:0005886">
    <property type="term" value="C:plasma membrane"/>
    <property type="evidence" value="ECO:0007669"/>
    <property type="project" value="UniProtKB-SubCell"/>
</dbReference>
<dbReference type="GO" id="GO:0022900">
    <property type="term" value="P:electron transport chain"/>
    <property type="evidence" value="ECO:0007669"/>
    <property type="project" value="UniProtKB-UniRule"/>
</dbReference>
<dbReference type="HAMAP" id="MF_00478">
    <property type="entry name" value="RsxE_RnfE"/>
    <property type="match status" value="1"/>
</dbReference>
<dbReference type="InterPro" id="IPR003667">
    <property type="entry name" value="NqrDE/RnfAE"/>
</dbReference>
<dbReference type="InterPro" id="IPR010968">
    <property type="entry name" value="RnfE"/>
</dbReference>
<dbReference type="NCBIfam" id="NF009070">
    <property type="entry name" value="PRK12405.1"/>
    <property type="match status" value="1"/>
</dbReference>
<dbReference type="NCBIfam" id="TIGR01948">
    <property type="entry name" value="rnfE"/>
    <property type="match status" value="1"/>
</dbReference>
<dbReference type="PANTHER" id="PTHR30586">
    <property type="entry name" value="ELECTRON TRANSPORT COMPLEX PROTEIN RNFE"/>
    <property type="match status" value="1"/>
</dbReference>
<dbReference type="PANTHER" id="PTHR30586:SF0">
    <property type="entry name" value="ION-TRANSLOCATING OXIDOREDUCTASE COMPLEX SUBUNIT E"/>
    <property type="match status" value="1"/>
</dbReference>
<dbReference type="Pfam" id="PF02508">
    <property type="entry name" value="Rnf-Nqr"/>
    <property type="match status" value="1"/>
</dbReference>
<dbReference type="PIRSF" id="PIRSF006102">
    <property type="entry name" value="NQR_DE"/>
    <property type="match status" value="1"/>
</dbReference>